<name>RNY_LIGS1</name>
<proteinExistence type="inferred from homology"/>
<keyword id="KW-1003">Cell membrane</keyword>
<keyword id="KW-0255">Endonuclease</keyword>
<keyword id="KW-0378">Hydrolase</keyword>
<keyword id="KW-0472">Membrane</keyword>
<keyword id="KW-0540">Nuclease</keyword>
<keyword id="KW-1185">Reference proteome</keyword>
<keyword id="KW-0694">RNA-binding</keyword>
<keyword id="KW-0812">Transmembrane</keyword>
<keyword id="KW-1133">Transmembrane helix</keyword>
<protein>
    <recommendedName>
        <fullName evidence="1">Ribonuclease Y</fullName>
        <shortName evidence="1">RNase Y</shortName>
        <ecNumber evidence="1">3.1.-.-</ecNumber>
    </recommendedName>
</protein>
<comment type="function">
    <text evidence="1">Endoribonuclease that initiates mRNA decay.</text>
</comment>
<comment type="subcellular location">
    <subcellularLocation>
        <location evidence="1">Cell membrane</location>
        <topology evidence="1">Single-pass membrane protein</topology>
    </subcellularLocation>
</comment>
<comment type="similarity">
    <text evidence="1">Belongs to the RNase Y family.</text>
</comment>
<organism>
    <name type="scientific">Ligilactobacillus salivarius (strain UCC118)</name>
    <name type="common">Lactobacillus salivarius</name>
    <dbReference type="NCBI Taxonomy" id="362948"/>
    <lineage>
        <taxon>Bacteria</taxon>
        <taxon>Bacillati</taxon>
        <taxon>Bacillota</taxon>
        <taxon>Bacilli</taxon>
        <taxon>Lactobacillales</taxon>
        <taxon>Lactobacillaceae</taxon>
        <taxon>Ligilactobacillus</taxon>
    </lineage>
</organism>
<reference key="1">
    <citation type="journal article" date="2006" name="Proc. Natl. Acad. Sci. U.S.A.">
        <title>Multireplicon genome architecture of Lactobacillus salivarius.</title>
        <authorList>
            <person name="Claesson M.J."/>
            <person name="Li Y."/>
            <person name="Leahy S."/>
            <person name="Canchaya C."/>
            <person name="van Pijkeren J.P."/>
            <person name="Cerdeno-Tarraga A.M."/>
            <person name="Parkhill J."/>
            <person name="Flynn S."/>
            <person name="O'Sullivan G.C."/>
            <person name="Collins J.K."/>
            <person name="Higgins D."/>
            <person name="Shanahan F."/>
            <person name="Fitzgerald G.F."/>
            <person name="van Sinderen D."/>
            <person name="O'Toole P.W."/>
        </authorList>
    </citation>
    <scope>NUCLEOTIDE SEQUENCE [LARGE SCALE GENOMIC DNA]</scope>
    <source>
        <strain>UCC118</strain>
    </source>
</reference>
<dbReference type="EC" id="3.1.-.-" evidence="1"/>
<dbReference type="EMBL" id="CP000233">
    <property type="protein sequence ID" value="ABD99937.1"/>
    <property type="molecule type" value="Genomic_DNA"/>
</dbReference>
<dbReference type="RefSeq" id="WP_011476179.1">
    <property type="nucleotide sequence ID" value="NC_007929.1"/>
</dbReference>
<dbReference type="RefSeq" id="YP_536020.1">
    <property type="nucleotide sequence ID" value="NC_007929.1"/>
</dbReference>
<dbReference type="SMR" id="Q1WT14"/>
<dbReference type="STRING" id="362948.LSL_1129"/>
<dbReference type="KEGG" id="lsl:LSL_1129"/>
<dbReference type="PATRIC" id="fig|362948.14.peg.1202"/>
<dbReference type="HOGENOM" id="CLU_028328_1_0_9"/>
<dbReference type="OrthoDB" id="9803205at2"/>
<dbReference type="Proteomes" id="UP000006559">
    <property type="component" value="Chromosome"/>
</dbReference>
<dbReference type="GO" id="GO:0005886">
    <property type="term" value="C:plasma membrane"/>
    <property type="evidence" value="ECO:0007669"/>
    <property type="project" value="UniProtKB-SubCell"/>
</dbReference>
<dbReference type="GO" id="GO:0003723">
    <property type="term" value="F:RNA binding"/>
    <property type="evidence" value="ECO:0007669"/>
    <property type="project" value="UniProtKB-UniRule"/>
</dbReference>
<dbReference type="GO" id="GO:0004521">
    <property type="term" value="F:RNA endonuclease activity"/>
    <property type="evidence" value="ECO:0007669"/>
    <property type="project" value="UniProtKB-UniRule"/>
</dbReference>
<dbReference type="GO" id="GO:0006402">
    <property type="term" value="P:mRNA catabolic process"/>
    <property type="evidence" value="ECO:0007669"/>
    <property type="project" value="UniProtKB-UniRule"/>
</dbReference>
<dbReference type="CDD" id="cd00077">
    <property type="entry name" value="HDc"/>
    <property type="match status" value="1"/>
</dbReference>
<dbReference type="CDD" id="cd22431">
    <property type="entry name" value="KH-I_RNaseY"/>
    <property type="match status" value="1"/>
</dbReference>
<dbReference type="FunFam" id="1.10.3210.10:FF:000003">
    <property type="entry name" value="Ribonuclease Y"/>
    <property type="match status" value="1"/>
</dbReference>
<dbReference type="FunFam" id="3.30.1370.10:FF:000006">
    <property type="entry name" value="Ribonuclease Y"/>
    <property type="match status" value="1"/>
</dbReference>
<dbReference type="Gene3D" id="1.10.3210.10">
    <property type="entry name" value="Hypothetical protein af1432"/>
    <property type="match status" value="1"/>
</dbReference>
<dbReference type="Gene3D" id="3.30.1370.10">
    <property type="entry name" value="K Homology domain, type 1"/>
    <property type="match status" value="1"/>
</dbReference>
<dbReference type="HAMAP" id="MF_00335">
    <property type="entry name" value="RNase_Y"/>
    <property type="match status" value="1"/>
</dbReference>
<dbReference type="InterPro" id="IPR003607">
    <property type="entry name" value="HD/PDEase_dom"/>
</dbReference>
<dbReference type="InterPro" id="IPR006674">
    <property type="entry name" value="HD_domain"/>
</dbReference>
<dbReference type="InterPro" id="IPR006675">
    <property type="entry name" value="HDIG_dom"/>
</dbReference>
<dbReference type="InterPro" id="IPR004087">
    <property type="entry name" value="KH_dom"/>
</dbReference>
<dbReference type="InterPro" id="IPR004088">
    <property type="entry name" value="KH_dom_type_1"/>
</dbReference>
<dbReference type="InterPro" id="IPR036612">
    <property type="entry name" value="KH_dom_type_1_sf"/>
</dbReference>
<dbReference type="InterPro" id="IPR017705">
    <property type="entry name" value="Ribonuclease_Y"/>
</dbReference>
<dbReference type="InterPro" id="IPR022711">
    <property type="entry name" value="RNase_Y_N"/>
</dbReference>
<dbReference type="NCBIfam" id="TIGR00277">
    <property type="entry name" value="HDIG"/>
    <property type="match status" value="1"/>
</dbReference>
<dbReference type="NCBIfam" id="TIGR03319">
    <property type="entry name" value="RNase_Y"/>
    <property type="match status" value="1"/>
</dbReference>
<dbReference type="PANTHER" id="PTHR12826">
    <property type="entry name" value="RIBONUCLEASE Y"/>
    <property type="match status" value="1"/>
</dbReference>
<dbReference type="PANTHER" id="PTHR12826:SF15">
    <property type="entry name" value="RIBONUCLEASE Y"/>
    <property type="match status" value="1"/>
</dbReference>
<dbReference type="Pfam" id="PF01966">
    <property type="entry name" value="HD"/>
    <property type="match status" value="1"/>
</dbReference>
<dbReference type="Pfam" id="PF00013">
    <property type="entry name" value="KH_1"/>
    <property type="match status" value="1"/>
</dbReference>
<dbReference type="Pfam" id="PF12072">
    <property type="entry name" value="RNase_Y_N"/>
    <property type="match status" value="1"/>
</dbReference>
<dbReference type="SMART" id="SM00471">
    <property type="entry name" value="HDc"/>
    <property type="match status" value="1"/>
</dbReference>
<dbReference type="SMART" id="SM00322">
    <property type="entry name" value="KH"/>
    <property type="match status" value="1"/>
</dbReference>
<dbReference type="SUPFAM" id="SSF54791">
    <property type="entry name" value="Eukaryotic type KH-domain (KH-domain type I)"/>
    <property type="match status" value="1"/>
</dbReference>
<dbReference type="SUPFAM" id="SSF109604">
    <property type="entry name" value="HD-domain/PDEase-like"/>
    <property type="match status" value="1"/>
</dbReference>
<dbReference type="PROSITE" id="PS51831">
    <property type="entry name" value="HD"/>
    <property type="match status" value="1"/>
</dbReference>
<dbReference type="PROSITE" id="PS50084">
    <property type="entry name" value="KH_TYPE_1"/>
    <property type="match status" value="1"/>
</dbReference>
<gene>
    <name evidence="1" type="primary">rny</name>
    <name type="ordered locus">LSL_1129</name>
</gene>
<accession>Q1WT14</accession>
<evidence type="ECO:0000255" key="1">
    <source>
        <dbReference type="HAMAP-Rule" id="MF_00335"/>
    </source>
</evidence>
<evidence type="ECO:0000255" key="2">
    <source>
        <dbReference type="PROSITE-ProRule" id="PRU01175"/>
    </source>
</evidence>
<sequence length="521" mass="58290">MIIAITILAIAIATLVIGFALGVAYRKRSYEQALDVATQTATGIIETAKKEAAASKKEAIIEAKEENHRYRSEIESELKERRSEIQRQENRLLQREEILDRKDTALDKREDVLEKKEAQLDSDQKVVTKQKEQASLLVKEQQDKLEEIAALTRPEAKELILNETKEELIHERAVMIKESEEETKATVDRKAKSLIAQAIQRSAADMVSETTVSVVNLPNDEMKGRIIGREGRNIRTLETLTGIDLIIDDTPEAVVLSGFDPVRREIAKMALERLIQDGRIHPARIEEMVDKATKDMDAKIREIGEEVIFDLGIHSMHPDLIKTIGRLNYRTSYGQNVLNHSIEVAKISGILAAELGEDVILAKRAGLLHDIGKAVDHEIEGSHVELGVELTKKYNESETVVNTIASHHGDTEPKSVIAVLVAAADAISAARPGARSESLENYIHRLEKLEDISNEFKGVQKSYAIQAGREVRVIVQPNEVSDLEATVLARDIRMKIEDELEYPGHIKVTVIRETRAVEYAK</sequence>
<feature type="chain" id="PRO_0000344898" description="Ribonuclease Y">
    <location>
        <begin position="1"/>
        <end position="521"/>
    </location>
</feature>
<feature type="transmembrane region" description="Helical" evidence="1">
    <location>
        <begin position="1"/>
        <end position="21"/>
    </location>
</feature>
<feature type="domain" description="KH" evidence="1">
    <location>
        <begin position="211"/>
        <end position="274"/>
    </location>
</feature>
<feature type="domain" description="HD" evidence="2">
    <location>
        <begin position="337"/>
        <end position="430"/>
    </location>
</feature>